<reference key="1">
    <citation type="journal article" date="1986" name="J. Biol. Chem.">
        <title>Cloning and expression of human apolipoprotein D cDNA.</title>
        <authorList>
            <person name="Drayna D.T."/>
            <person name="Fielding C."/>
            <person name="McLean J.W."/>
            <person name="Baer B."/>
            <person name="Castro G."/>
            <person name="Chen E."/>
            <person name="Comstock L."/>
            <person name="Henzel W."/>
            <person name="Kohr W."/>
            <person name="Rhee L."/>
            <person name="Wion K.L."/>
            <person name="Lawn R.M."/>
        </authorList>
    </citation>
    <scope>NUCLEOTIDE SEQUENCE [MRNA]</scope>
</reference>
<reference key="2">
    <citation type="journal article" date="1987" name="DNA">
        <title>Human apolipoprotein D gene: gene sequence, chromosome localization, and homology to the alpha 2u-globulin superfamily.</title>
        <authorList>
            <person name="Drayna D.T."/>
            <person name="McLean J.W."/>
            <person name="Wion K.L."/>
            <person name="Trent J.M."/>
            <person name="Drabkin H.A."/>
            <person name="Lawn R.M."/>
        </authorList>
    </citation>
    <scope>NUCLEOTIDE SEQUENCE [GENOMIC DNA]</scope>
</reference>
<reference key="3">
    <citation type="submission" date="2004-06" db="EMBL/GenBank/DDBJ databases">
        <title>Cloning of human full open reading frames in Gateway(TM) system entry vector (pDONR201).</title>
        <authorList>
            <person name="Ebert L."/>
            <person name="Schick M."/>
            <person name="Neubert P."/>
            <person name="Schatten R."/>
            <person name="Henze S."/>
            <person name="Korn B."/>
        </authorList>
    </citation>
    <scope>NUCLEOTIDE SEQUENCE [LARGE SCALE MRNA]</scope>
</reference>
<reference key="4">
    <citation type="submission" date="2004-06" db="EMBL/GenBank/DDBJ databases">
        <title>Cloning of human full open reading frames in Gateway(TM) system entry vector (pDONR201).</title>
        <authorList>
            <person name="Halleck A."/>
            <person name="Ebert L."/>
            <person name="Mkoundinya M."/>
            <person name="Schick M."/>
            <person name="Eisenstein S."/>
            <person name="Neubert P."/>
            <person name="Kstrang K."/>
            <person name="Schatten R."/>
            <person name="Shen B."/>
            <person name="Henze S."/>
            <person name="Mar W."/>
            <person name="Korn B."/>
            <person name="Zuo D."/>
            <person name="Hu Y."/>
            <person name="LaBaer J."/>
        </authorList>
    </citation>
    <scope>NUCLEOTIDE SEQUENCE [LARGE SCALE MRNA]</scope>
</reference>
<reference key="5">
    <citation type="submission" date="2004-10" db="EMBL/GenBank/DDBJ databases">
        <title>Cloning of human full-length CDSs in BD Creator(TM) system donor vector.</title>
        <authorList>
            <person name="Kalnine N."/>
            <person name="Chen X."/>
            <person name="Rolfs A."/>
            <person name="Halleck A."/>
            <person name="Hines L."/>
            <person name="Eisenstein S."/>
            <person name="Koundinya M."/>
            <person name="Raphael J."/>
            <person name="Moreira D."/>
            <person name="Kelley T."/>
            <person name="LaBaer J."/>
            <person name="Lin Y."/>
            <person name="Phelan M."/>
            <person name="Farmer A."/>
        </authorList>
    </citation>
    <scope>NUCLEOTIDE SEQUENCE [LARGE SCALE MRNA]</scope>
</reference>
<reference key="6">
    <citation type="journal article" date="2004" name="Nat. Genet.">
        <title>Complete sequencing and characterization of 21,243 full-length human cDNAs.</title>
        <authorList>
            <person name="Ota T."/>
            <person name="Suzuki Y."/>
            <person name="Nishikawa T."/>
            <person name="Otsuki T."/>
            <person name="Sugiyama T."/>
            <person name="Irie R."/>
            <person name="Wakamatsu A."/>
            <person name="Hayashi K."/>
            <person name="Sato H."/>
            <person name="Nagai K."/>
            <person name="Kimura K."/>
            <person name="Makita H."/>
            <person name="Sekine M."/>
            <person name="Obayashi M."/>
            <person name="Nishi T."/>
            <person name="Shibahara T."/>
            <person name="Tanaka T."/>
            <person name="Ishii S."/>
            <person name="Yamamoto J."/>
            <person name="Saito K."/>
            <person name="Kawai Y."/>
            <person name="Isono Y."/>
            <person name="Nakamura Y."/>
            <person name="Nagahari K."/>
            <person name="Murakami K."/>
            <person name="Yasuda T."/>
            <person name="Iwayanagi T."/>
            <person name="Wagatsuma M."/>
            <person name="Shiratori A."/>
            <person name="Sudo H."/>
            <person name="Hosoiri T."/>
            <person name="Kaku Y."/>
            <person name="Kodaira H."/>
            <person name="Kondo H."/>
            <person name="Sugawara M."/>
            <person name="Takahashi M."/>
            <person name="Kanda K."/>
            <person name="Yokoi T."/>
            <person name="Furuya T."/>
            <person name="Kikkawa E."/>
            <person name="Omura Y."/>
            <person name="Abe K."/>
            <person name="Kamihara K."/>
            <person name="Katsuta N."/>
            <person name="Sato K."/>
            <person name="Tanikawa M."/>
            <person name="Yamazaki M."/>
            <person name="Ninomiya K."/>
            <person name="Ishibashi T."/>
            <person name="Yamashita H."/>
            <person name="Murakawa K."/>
            <person name="Fujimori K."/>
            <person name="Tanai H."/>
            <person name="Kimata M."/>
            <person name="Watanabe M."/>
            <person name="Hiraoka S."/>
            <person name="Chiba Y."/>
            <person name="Ishida S."/>
            <person name="Ono Y."/>
            <person name="Takiguchi S."/>
            <person name="Watanabe S."/>
            <person name="Yosida M."/>
            <person name="Hotuta T."/>
            <person name="Kusano J."/>
            <person name="Kanehori K."/>
            <person name="Takahashi-Fujii A."/>
            <person name="Hara H."/>
            <person name="Tanase T.-O."/>
            <person name="Nomura Y."/>
            <person name="Togiya S."/>
            <person name="Komai F."/>
            <person name="Hara R."/>
            <person name="Takeuchi K."/>
            <person name="Arita M."/>
            <person name="Imose N."/>
            <person name="Musashino K."/>
            <person name="Yuuki H."/>
            <person name="Oshima A."/>
            <person name="Sasaki N."/>
            <person name="Aotsuka S."/>
            <person name="Yoshikawa Y."/>
            <person name="Matsunawa H."/>
            <person name="Ichihara T."/>
            <person name="Shiohata N."/>
            <person name="Sano S."/>
            <person name="Moriya S."/>
            <person name="Momiyama H."/>
            <person name="Satoh N."/>
            <person name="Takami S."/>
            <person name="Terashima Y."/>
            <person name="Suzuki O."/>
            <person name="Nakagawa S."/>
            <person name="Senoh A."/>
            <person name="Mizoguchi H."/>
            <person name="Goto Y."/>
            <person name="Shimizu F."/>
            <person name="Wakebe H."/>
            <person name="Hishigaki H."/>
            <person name="Watanabe T."/>
            <person name="Sugiyama A."/>
            <person name="Takemoto M."/>
            <person name="Kawakami B."/>
            <person name="Yamazaki M."/>
            <person name="Watanabe K."/>
            <person name="Kumagai A."/>
            <person name="Itakura S."/>
            <person name="Fukuzumi Y."/>
            <person name="Fujimori Y."/>
            <person name="Komiyama M."/>
            <person name="Tashiro H."/>
            <person name="Tanigami A."/>
            <person name="Fujiwara T."/>
            <person name="Ono T."/>
            <person name="Yamada K."/>
            <person name="Fujii Y."/>
            <person name="Ozaki K."/>
            <person name="Hirao M."/>
            <person name="Ohmori Y."/>
            <person name="Kawabata A."/>
            <person name="Hikiji T."/>
            <person name="Kobatake N."/>
            <person name="Inagaki H."/>
            <person name="Ikema Y."/>
            <person name="Okamoto S."/>
            <person name="Okitani R."/>
            <person name="Kawakami T."/>
            <person name="Noguchi S."/>
            <person name="Itoh T."/>
            <person name="Shigeta K."/>
            <person name="Senba T."/>
            <person name="Matsumura K."/>
            <person name="Nakajima Y."/>
            <person name="Mizuno T."/>
            <person name="Morinaga M."/>
            <person name="Sasaki M."/>
            <person name="Togashi T."/>
            <person name="Oyama M."/>
            <person name="Hata H."/>
            <person name="Watanabe M."/>
            <person name="Komatsu T."/>
            <person name="Mizushima-Sugano J."/>
            <person name="Satoh T."/>
            <person name="Shirai Y."/>
            <person name="Takahashi Y."/>
            <person name="Nakagawa K."/>
            <person name="Okumura K."/>
            <person name="Nagase T."/>
            <person name="Nomura N."/>
            <person name="Kikuchi H."/>
            <person name="Masuho Y."/>
            <person name="Yamashita R."/>
            <person name="Nakai K."/>
            <person name="Yada T."/>
            <person name="Nakamura Y."/>
            <person name="Ohara O."/>
            <person name="Isogai T."/>
            <person name="Sugano S."/>
        </authorList>
    </citation>
    <scope>NUCLEOTIDE SEQUENCE [LARGE SCALE MRNA]</scope>
    <source>
        <tissue>Cerebellum</tissue>
    </source>
</reference>
<reference key="7">
    <citation type="submission" date="2005-09" db="EMBL/GenBank/DDBJ databases">
        <authorList>
            <person name="Mural R.J."/>
            <person name="Istrail S."/>
            <person name="Sutton G.G."/>
            <person name="Florea L."/>
            <person name="Halpern A.L."/>
            <person name="Mobarry C.M."/>
            <person name="Lippert R."/>
            <person name="Walenz B."/>
            <person name="Shatkay H."/>
            <person name="Dew I."/>
            <person name="Miller J.R."/>
            <person name="Flanigan M.J."/>
            <person name="Edwards N.J."/>
            <person name="Bolanos R."/>
            <person name="Fasulo D."/>
            <person name="Halldorsson B.V."/>
            <person name="Hannenhalli S."/>
            <person name="Turner R."/>
            <person name="Yooseph S."/>
            <person name="Lu F."/>
            <person name="Nusskern D.R."/>
            <person name="Shue B.C."/>
            <person name="Zheng X.H."/>
            <person name="Zhong F."/>
            <person name="Delcher A.L."/>
            <person name="Huson D.H."/>
            <person name="Kravitz S.A."/>
            <person name="Mouchard L."/>
            <person name="Reinert K."/>
            <person name="Remington K.A."/>
            <person name="Clark A.G."/>
            <person name="Waterman M.S."/>
            <person name="Eichler E.E."/>
            <person name="Adams M.D."/>
            <person name="Hunkapiller M.W."/>
            <person name="Myers E.W."/>
            <person name="Venter J.C."/>
        </authorList>
    </citation>
    <scope>NUCLEOTIDE SEQUENCE [LARGE SCALE GENOMIC DNA]</scope>
</reference>
<reference key="8">
    <citation type="journal article" date="2004" name="Genome Res.">
        <title>The status, quality, and expansion of the NIH full-length cDNA project: the Mammalian Gene Collection (MGC).</title>
        <authorList>
            <consortium name="The MGC Project Team"/>
        </authorList>
    </citation>
    <scope>NUCLEOTIDE SEQUENCE [LARGE SCALE MRNA]</scope>
    <source>
        <tissue>Skin</tissue>
    </source>
</reference>
<reference key="9">
    <citation type="journal article" date="1994" name="Biochemistry">
        <title>Structure of human apolipoprotein D: locations of the intermolecular and intramolecular disulfide links.</title>
        <authorList>
            <person name="Yang C.-Y."/>
            <person name="Gu Z.-W."/>
            <person name="Blanco-Vaca F."/>
            <person name="Gaskell S.J."/>
            <person name="Yang M."/>
            <person name="Massey J.B."/>
            <person name="Gotto A.M. Jr."/>
            <person name="Pownall H.J."/>
        </authorList>
    </citation>
    <scope>PROTEIN SEQUENCE OF 21-189</scope>
    <scope>DISULFIDE BONDS</scope>
    <scope>PYROGLUTAMATE FORMATION AT GLN-21</scope>
    <scope>GLYCOSYLATION AT ASN-65 AND ASN-98</scope>
    <source>
        <tissue>Plasma</tissue>
    </source>
</reference>
<reference key="10">
    <citation type="journal article" date="1995" name="Exp. Eye Res.">
        <title>The human lacrimal gland synthesizes apolipoprotein D mRNA in addition to tear prealbumin mRNA, both species encoding members of the lipocalin superfamily.</title>
        <authorList>
            <person name="Holzfeind P."/>
            <person name="Merschak P."/>
            <person name="Dieplinger H."/>
            <person name="Redl B."/>
        </authorList>
    </citation>
    <scope>NUCLEOTIDE SEQUENCE [MRNA] OF 92-189</scope>
    <source>
        <tissue>Lacrimal gland</tissue>
    </source>
</reference>
<reference key="11">
    <citation type="journal article" date="1990" name="Biochem. J.">
        <title>Apolipoprotein D is the major protein component in cyst fluid from women with human breast gross cystic disease.</title>
        <authorList>
            <person name="Balbin M."/>
            <person name="Freije J.M.P."/>
            <person name="Fueyo A."/>
            <person name="Sanchez L.M."/>
            <person name="Lopez-Otin C."/>
        </authorList>
    </citation>
    <scope>PROTEIN SEQUENCE OF 128-187</scope>
</reference>
<reference key="12">
    <citation type="journal article" date="2004" name="Proteomics">
        <title>Screening for N-glycosylated proteins by liquid chromatography mass spectrometry.</title>
        <authorList>
            <person name="Bunkenborg J."/>
            <person name="Pilch B.J."/>
            <person name="Podtelejnikov A.V."/>
            <person name="Wisniewski J.R."/>
        </authorList>
    </citation>
    <scope>GLYCOSYLATION [LARGE SCALE ANALYSIS] AT ASN-98</scope>
    <source>
        <tissue>Plasma</tissue>
    </source>
</reference>
<reference key="13">
    <citation type="journal article" date="2005" name="J. Proteome Res.">
        <title>Human plasma N-glycoproteome analysis by immunoaffinity subtraction, hydrazide chemistry, and mass spectrometry.</title>
        <authorList>
            <person name="Liu T."/>
            <person name="Qian W.-J."/>
            <person name="Gritsenko M.A."/>
            <person name="Camp D.G. II"/>
            <person name="Monroe M.E."/>
            <person name="Moore R.J."/>
            <person name="Smith R.D."/>
        </authorList>
    </citation>
    <scope>GLYCOSYLATION [LARGE SCALE ANALYSIS] AT ASN-98</scope>
    <source>
        <tissue>Plasma</tissue>
    </source>
</reference>
<reference key="14">
    <citation type="journal article" date="2009" name="J. Proteome Res.">
        <title>Glycoproteomics analysis of human liver tissue by combination of multiple enzyme digestion and hydrazide chemistry.</title>
        <authorList>
            <person name="Chen R."/>
            <person name="Jiang X."/>
            <person name="Sun D."/>
            <person name="Han G."/>
            <person name="Wang F."/>
            <person name="Ye M."/>
            <person name="Wang L."/>
            <person name="Zou H."/>
        </authorList>
    </citation>
    <scope>GLYCOSYLATION [LARGE SCALE ANALYSIS] AT ASN-65 AND ASN-98</scope>
    <source>
        <tissue>Liver</tissue>
    </source>
</reference>
<reference key="15">
    <citation type="journal article" date="2009" name="Mol. Cell. Proteomics">
        <title>A strategy for precise and large scale identification of core fucosylated glycoproteins.</title>
        <authorList>
            <person name="Jia W."/>
            <person name="Lu Z."/>
            <person name="Fu Y."/>
            <person name="Wang H.P."/>
            <person name="Wang L.H."/>
            <person name="Chi H."/>
            <person name="Yuan Z.F."/>
            <person name="Zheng Z.B."/>
            <person name="Song L.N."/>
            <person name="Han H.H."/>
            <person name="Liang Y.M."/>
            <person name="Wang J.L."/>
            <person name="Cai Y."/>
            <person name="Zhang Y.K."/>
            <person name="Deng Y.L."/>
            <person name="Ying W.T."/>
            <person name="He S.M."/>
            <person name="Qian X.H."/>
        </authorList>
    </citation>
    <scope>GLYCOSYLATION AT ASN-98</scope>
</reference>
<reference key="16">
    <citation type="journal article" date="2009" name="Nat. Methods">
        <title>Enrichment of glycopeptides for glycan structure and attachment site identification.</title>
        <authorList>
            <person name="Nilsson J."/>
            <person name="Rueetschi U."/>
            <person name="Halim A."/>
            <person name="Hesse C."/>
            <person name="Carlsohn E."/>
            <person name="Brinkmalm G."/>
            <person name="Larson G."/>
        </authorList>
    </citation>
    <scope>GLYCOSYLATION [LARGE SCALE ANALYSIS] AT ASN-98</scope>
    <scope>STRUCTURE OF CARBOHYDRATES</scope>
    <source>
        <tissue>Cerebrospinal fluid</tissue>
    </source>
</reference>
<reference key="17">
    <citation type="journal article" date="2012" name="Mol. Cell. Proteomics">
        <title>Human urinary glycoproteomics; attachment site specific analysis of N- and O-linked glycosylations by CID and ECD.</title>
        <authorList>
            <person name="Halim A."/>
            <person name="Nilsson J."/>
            <person name="Ruetschi U."/>
            <person name="Hesse C."/>
            <person name="Larson G."/>
        </authorList>
    </citation>
    <scope>GLYCOSYLATION AT ASN-65 AND ASN-98</scope>
    <scope>STRUCTURE OF CARBOHYDRATES</scope>
    <scope>IDENTIFICATION BY MASS SPECTROMETRY</scope>
</reference>
<reference key="18">
    <citation type="journal article" date="2014" name="J. Proteomics">
        <title>An enzyme assisted RP-RPLC approach for in-depth analysis of human liver phosphoproteome.</title>
        <authorList>
            <person name="Bian Y."/>
            <person name="Song C."/>
            <person name="Cheng K."/>
            <person name="Dong M."/>
            <person name="Wang F."/>
            <person name="Huang J."/>
            <person name="Sun D."/>
            <person name="Wang L."/>
            <person name="Ye M."/>
            <person name="Zou H."/>
        </authorList>
    </citation>
    <scope>IDENTIFICATION BY MASS SPECTROMETRY [LARGE SCALE ANALYSIS]</scope>
    <source>
        <tissue>Liver</tissue>
    </source>
</reference>
<reference key="19">
    <citation type="journal article" date="1990" name="New Biol.">
        <title>Is apolipoprotein D a mammalian bilin-binding protein?</title>
        <authorList>
            <person name="Peitsch M.C."/>
            <person name="Boguski M.S."/>
        </authorList>
    </citation>
    <scope>3D-STRUCTURE MODELING</scope>
    <scope>BILIN-BINDING</scope>
</reference>
<reference key="20">
    <citation type="journal article" date="1995" name="Protein Sci.">
        <title>Site-specific detection and structural characterization of the glycosylation of human plasma proteins lecithin:cholesterol acyltransferase and apolipoprotein D using HPLC/electrospray mass spectrometry and sequential glycosidase digestion.</title>
        <authorList>
            <person name="Schindler P.A."/>
            <person name="Settineri C.A."/>
            <person name="Collet X."/>
            <person name="Fielding C.J."/>
            <person name="Burlingame A.L."/>
        </authorList>
    </citation>
    <scope>GLYCOSYLATION AT ASN-65 AND ASN-98</scope>
</reference>
<reference key="21">
    <citation type="journal article" date="1999" name="Nat. Genet.">
        <title>Characterization of single-nucleotide polymorphisms in coding regions of human genes.</title>
        <authorList>
            <person name="Cargill M."/>
            <person name="Altshuler D."/>
            <person name="Ireland J."/>
            <person name="Sklar P."/>
            <person name="Ardlie K."/>
            <person name="Patil N."/>
            <person name="Shaw N."/>
            <person name="Lane C.R."/>
            <person name="Lim E.P."/>
            <person name="Kalyanaraman N."/>
            <person name="Nemesh J."/>
            <person name="Ziaugra L."/>
            <person name="Friedland L."/>
            <person name="Rolfe A."/>
            <person name="Warrington J."/>
            <person name="Lipshutz R."/>
            <person name="Daley G.Q."/>
            <person name="Lander E.S."/>
        </authorList>
    </citation>
    <scope>VARIANTS SER-15; LEU-115 AND LYS-178</scope>
</reference>
<reference key="22">
    <citation type="journal article" date="1999" name="Nat. Genet.">
        <authorList>
            <person name="Cargill M."/>
            <person name="Altshuler D."/>
            <person name="Ireland J."/>
            <person name="Sklar P."/>
            <person name="Ardlie K."/>
            <person name="Patil N."/>
            <person name="Shaw N."/>
            <person name="Lane C.R."/>
            <person name="Lim E.P."/>
            <person name="Kalyanaraman N."/>
            <person name="Nemesh J."/>
            <person name="Ziaugra L."/>
            <person name="Friedland L."/>
            <person name="Rolfe A."/>
            <person name="Warrington J."/>
            <person name="Lipshutz R."/>
            <person name="Daley G.Q."/>
            <person name="Lander E.S."/>
        </authorList>
    </citation>
    <scope>ERRATUM OF PUBMED:10391209</scope>
</reference>
<organism>
    <name type="scientific">Homo sapiens</name>
    <name type="common">Human</name>
    <dbReference type="NCBI Taxonomy" id="9606"/>
    <lineage>
        <taxon>Eukaryota</taxon>
        <taxon>Metazoa</taxon>
        <taxon>Chordata</taxon>
        <taxon>Craniata</taxon>
        <taxon>Vertebrata</taxon>
        <taxon>Euteleostomi</taxon>
        <taxon>Mammalia</taxon>
        <taxon>Eutheria</taxon>
        <taxon>Euarchontoglires</taxon>
        <taxon>Primates</taxon>
        <taxon>Haplorrhini</taxon>
        <taxon>Catarrhini</taxon>
        <taxon>Hominidae</taxon>
        <taxon>Homo</taxon>
    </lineage>
</organism>
<gene>
    <name type="primary">APOD</name>
</gene>
<evidence type="ECO:0000269" key="1">
    <source>
    </source>
</evidence>
<evidence type="ECO:0000269" key="2">
    <source>
    </source>
</evidence>
<evidence type="ECO:0000269" key="3">
    <source>
    </source>
</evidence>
<evidence type="ECO:0000269" key="4">
    <source>
    </source>
</evidence>
<evidence type="ECO:0000269" key="5">
    <source>
    </source>
</evidence>
<evidence type="ECO:0000269" key="6">
    <source>
    </source>
</evidence>
<evidence type="ECO:0000269" key="7">
    <source>
    </source>
</evidence>
<evidence type="ECO:0000269" key="8">
    <source>
    </source>
</evidence>
<evidence type="ECO:0000269" key="9">
    <source>
    </source>
</evidence>
<evidence type="ECO:0000269" key="10">
    <source>
    </source>
</evidence>
<evidence type="ECO:0000305" key="11"/>
<evidence type="ECO:0007829" key="12">
    <source>
        <dbReference type="PDB" id="2HZQ"/>
    </source>
</evidence>
<sequence length="189" mass="21276">MVMLLLLLSALAGLFGAAEGQAFHLGKCPNPPVQENFDVNKYLGRWYEIEKIPTTFENGRCIQANYSLMENGKIKVLNQELRADGTVNQIEGEATPVNLTEPAKLEVKFSWFMPSAPYWILATDYENYALVYSCTCIIQLFHVDFAWILARNPNLPPETVDSLKNILTSNNIDVKKMTVTDQVNCPKLS</sequence>
<dbReference type="EMBL" id="J02611">
    <property type="protein sequence ID" value="AAB59517.1"/>
    <property type="molecule type" value="mRNA"/>
</dbReference>
<dbReference type="EMBL" id="M16696">
    <property type="protein sequence ID" value="AAA51764.1"/>
    <property type="molecule type" value="Genomic_DNA"/>
</dbReference>
<dbReference type="EMBL" id="BT019860">
    <property type="protein sequence ID" value="AAV38663.1"/>
    <property type="molecule type" value="mRNA"/>
</dbReference>
<dbReference type="EMBL" id="BT019861">
    <property type="protein sequence ID" value="AAV38664.1"/>
    <property type="molecule type" value="mRNA"/>
</dbReference>
<dbReference type="EMBL" id="CR456838">
    <property type="protein sequence ID" value="CAG33119.1"/>
    <property type="molecule type" value="mRNA"/>
</dbReference>
<dbReference type="EMBL" id="CR541773">
    <property type="protein sequence ID" value="CAG46572.1"/>
    <property type="molecule type" value="mRNA"/>
</dbReference>
<dbReference type="EMBL" id="AK312090">
    <property type="protein sequence ID" value="BAG35026.1"/>
    <property type="molecule type" value="mRNA"/>
</dbReference>
<dbReference type="EMBL" id="CH471052">
    <property type="protein sequence ID" value="EAW78023.1"/>
    <property type="molecule type" value="Genomic_DNA"/>
</dbReference>
<dbReference type="EMBL" id="CH471052">
    <property type="protein sequence ID" value="EAW78024.1"/>
    <property type="molecule type" value="Genomic_DNA"/>
</dbReference>
<dbReference type="EMBL" id="BC007402">
    <property type="protein sequence ID" value="AAH07402.1"/>
    <property type="molecule type" value="mRNA"/>
</dbReference>
<dbReference type="EMBL" id="S80440">
    <property type="protein sequence ID" value="AAB35919.1"/>
    <property type="molecule type" value="mRNA"/>
</dbReference>
<dbReference type="CCDS" id="CCDS33925.1"/>
<dbReference type="PIR" id="A26958">
    <property type="entry name" value="LPHUD"/>
</dbReference>
<dbReference type="RefSeq" id="NP_001638.1">
    <property type="nucleotide sequence ID" value="NM_001647.4"/>
</dbReference>
<dbReference type="PDB" id="2HZQ">
    <property type="method" value="X-ray"/>
    <property type="resolution" value="1.80 A"/>
    <property type="chains" value="A=23-189"/>
</dbReference>
<dbReference type="PDB" id="2HZR">
    <property type="method" value="X-ray"/>
    <property type="resolution" value="1.80 A"/>
    <property type="chains" value="A=23-189"/>
</dbReference>
<dbReference type="PDBsum" id="2HZQ"/>
<dbReference type="PDBsum" id="2HZR"/>
<dbReference type="SASBDB" id="P05090"/>
<dbReference type="SMR" id="P05090"/>
<dbReference type="BioGRID" id="106844">
    <property type="interactions" value="214"/>
</dbReference>
<dbReference type="FunCoup" id="P05090">
    <property type="interactions" value="572"/>
</dbReference>
<dbReference type="IntAct" id="P05090">
    <property type="interactions" value="154"/>
</dbReference>
<dbReference type="MINT" id="P05090"/>
<dbReference type="STRING" id="9606.ENSP00000345179"/>
<dbReference type="DrugBank" id="DB09130">
    <property type="generic name" value="Copper"/>
</dbReference>
<dbReference type="DrugBank" id="DB11886">
    <property type="generic name" value="Infigratinib"/>
</dbReference>
<dbReference type="DrugBank" id="DB00877">
    <property type="generic name" value="Sirolimus"/>
</dbReference>
<dbReference type="DrugBank" id="DB00460">
    <property type="generic name" value="Verteporfin"/>
</dbReference>
<dbReference type="DrugBank" id="DB00162">
    <property type="generic name" value="Vitamin A"/>
</dbReference>
<dbReference type="SwissLipids" id="SLP:000001524"/>
<dbReference type="GlyConnect" id="677">
    <property type="glycosylation" value="90 N-Linked glycans (2 sites)"/>
</dbReference>
<dbReference type="GlyCosmos" id="P05090">
    <property type="glycosylation" value="3 sites, 113 glycans"/>
</dbReference>
<dbReference type="GlyGen" id="P05090">
    <property type="glycosylation" value="4 sites, 214 N-linked glycans (2 sites), 1 O-linked glycan (1 site)"/>
</dbReference>
<dbReference type="iPTMnet" id="P05090"/>
<dbReference type="MetOSite" id="P05090"/>
<dbReference type="PhosphoSitePlus" id="P05090"/>
<dbReference type="SwissPalm" id="P05090"/>
<dbReference type="BioMuta" id="APOD"/>
<dbReference type="DMDM" id="114034"/>
<dbReference type="CPTAC" id="non-CPTAC-1086"/>
<dbReference type="jPOST" id="P05090"/>
<dbReference type="MassIVE" id="P05090"/>
<dbReference type="PaxDb" id="9606-ENSP00000345179"/>
<dbReference type="PeptideAtlas" id="P05090"/>
<dbReference type="ProteomicsDB" id="51787"/>
<dbReference type="Pumba" id="P05090"/>
<dbReference type="Antibodypedia" id="19470">
    <property type="antibodies" value="385 antibodies from 37 providers"/>
</dbReference>
<dbReference type="DNASU" id="347"/>
<dbReference type="Ensembl" id="ENST00000343267.8">
    <property type="protein sequence ID" value="ENSP00000345179.3"/>
    <property type="gene ID" value="ENSG00000189058.9"/>
</dbReference>
<dbReference type="GeneID" id="347"/>
<dbReference type="KEGG" id="hsa:347"/>
<dbReference type="MANE-Select" id="ENST00000343267.8">
    <property type="protein sequence ID" value="ENSP00000345179.3"/>
    <property type="RefSeq nucleotide sequence ID" value="NM_001647.4"/>
    <property type="RefSeq protein sequence ID" value="NP_001638.1"/>
</dbReference>
<dbReference type="UCSC" id="uc003fur.2">
    <property type="organism name" value="human"/>
</dbReference>
<dbReference type="AGR" id="HGNC:612"/>
<dbReference type="CTD" id="347"/>
<dbReference type="DisGeNET" id="347"/>
<dbReference type="GeneCards" id="APOD"/>
<dbReference type="HGNC" id="HGNC:612">
    <property type="gene designation" value="APOD"/>
</dbReference>
<dbReference type="HPA" id="ENSG00000189058">
    <property type="expression patterns" value="Tissue enhanced (breast, choroid plexus)"/>
</dbReference>
<dbReference type="MIM" id="107740">
    <property type="type" value="gene"/>
</dbReference>
<dbReference type="neXtProt" id="NX_P05090"/>
<dbReference type="OpenTargets" id="ENSG00000189058"/>
<dbReference type="PharmGKB" id="PA24900"/>
<dbReference type="VEuPathDB" id="HostDB:ENSG00000189058"/>
<dbReference type="eggNOG" id="KOG4824">
    <property type="taxonomic scope" value="Eukaryota"/>
</dbReference>
<dbReference type="GeneTree" id="ENSGT00510000046981"/>
<dbReference type="InParanoid" id="P05090"/>
<dbReference type="OMA" id="HKYLGRW"/>
<dbReference type="OrthoDB" id="565904at2759"/>
<dbReference type="PAN-GO" id="P05090">
    <property type="GO annotations" value="4 GO annotations based on evolutionary models"/>
</dbReference>
<dbReference type="PhylomeDB" id="P05090"/>
<dbReference type="TreeFam" id="TF324836"/>
<dbReference type="PathwayCommons" id="P05090"/>
<dbReference type="Reactome" id="R-HSA-804914">
    <property type="pathway name" value="Transport of fatty acids"/>
</dbReference>
<dbReference type="Reactome" id="R-HSA-9029569">
    <property type="pathway name" value="NR1H3 &amp; NR1H2 regulate gene expression linked to cholesterol transport and efflux"/>
</dbReference>
<dbReference type="SignaLink" id="P05090"/>
<dbReference type="BioGRID-ORCS" id="347">
    <property type="hits" value="7 hits in 1145 CRISPR screens"/>
</dbReference>
<dbReference type="CD-CODE" id="FB4E32DD">
    <property type="entry name" value="Presynaptic clusters and postsynaptic densities"/>
</dbReference>
<dbReference type="ChiTaRS" id="APOD">
    <property type="organism name" value="human"/>
</dbReference>
<dbReference type="EvolutionaryTrace" id="P05090"/>
<dbReference type="GeneWiki" id="Apolipoprotein_D"/>
<dbReference type="GenomeRNAi" id="347"/>
<dbReference type="Pharos" id="P05090">
    <property type="development level" value="Tbio"/>
</dbReference>
<dbReference type="PRO" id="PR:P05090"/>
<dbReference type="Proteomes" id="UP000005640">
    <property type="component" value="Chromosome 3"/>
</dbReference>
<dbReference type="RNAct" id="P05090">
    <property type="molecule type" value="protein"/>
</dbReference>
<dbReference type="Bgee" id="ENSG00000189058">
    <property type="expression patterns" value="Expressed in olfactory bulb and 195 other cell types or tissues"/>
</dbReference>
<dbReference type="ExpressionAtlas" id="P05090">
    <property type="expression patterns" value="baseline and differential"/>
</dbReference>
<dbReference type="GO" id="GO:0005737">
    <property type="term" value="C:cytoplasm"/>
    <property type="evidence" value="ECO:0000318"/>
    <property type="project" value="GO_Central"/>
</dbReference>
<dbReference type="GO" id="GO:0022626">
    <property type="term" value="C:cytosolic ribosome"/>
    <property type="evidence" value="ECO:0000250"/>
    <property type="project" value="UniProtKB"/>
</dbReference>
<dbReference type="GO" id="GO:0030425">
    <property type="term" value="C:dendrite"/>
    <property type="evidence" value="ECO:0000250"/>
    <property type="project" value="UniProtKB"/>
</dbReference>
<dbReference type="GO" id="GO:0005783">
    <property type="term" value="C:endoplasmic reticulum"/>
    <property type="evidence" value="ECO:0000250"/>
    <property type="project" value="UniProtKB"/>
</dbReference>
<dbReference type="GO" id="GO:0070062">
    <property type="term" value="C:extracellular exosome"/>
    <property type="evidence" value="ECO:0007005"/>
    <property type="project" value="UniProtKB"/>
</dbReference>
<dbReference type="GO" id="GO:0005576">
    <property type="term" value="C:extracellular region"/>
    <property type="evidence" value="ECO:0007005"/>
    <property type="project" value="BHF-UCL"/>
</dbReference>
<dbReference type="GO" id="GO:0005615">
    <property type="term" value="C:extracellular space"/>
    <property type="evidence" value="ECO:0000314"/>
    <property type="project" value="UniProtKB"/>
</dbReference>
<dbReference type="GO" id="GO:0043025">
    <property type="term" value="C:neuronal cell body"/>
    <property type="evidence" value="ECO:0000250"/>
    <property type="project" value="UniProtKB"/>
</dbReference>
<dbReference type="GO" id="GO:0048471">
    <property type="term" value="C:perinuclear region of cytoplasm"/>
    <property type="evidence" value="ECO:0000314"/>
    <property type="project" value="UniProtKB"/>
</dbReference>
<dbReference type="GO" id="GO:0015485">
    <property type="term" value="F:cholesterol binding"/>
    <property type="evidence" value="ECO:0000314"/>
    <property type="project" value="UniProtKB"/>
</dbReference>
<dbReference type="GO" id="GO:0005319">
    <property type="term" value="F:lipid transporter activity"/>
    <property type="evidence" value="ECO:0000303"/>
    <property type="project" value="UniProtKB"/>
</dbReference>
<dbReference type="GO" id="GO:0001525">
    <property type="term" value="P:angiogenesis"/>
    <property type="evidence" value="ECO:0000303"/>
    <property type="project" value="UniProtKB"/>
</dbReference>
<dbReference type="GO" id="GO:0007420">
    <property type="term" value="P:brain development"/>
    <property type="evidence" value="ECO:0007669"/>
    <property type="project" value="InterPro"/>
</dbReference>
<dbReference type="GO" id="GO:0006006">
    <property type="term" value="P:glucose metabolic process"/>
    <property type="evidence" value="ECO:0000314"/>
    <property type="project" value="UniProtKB"/>
</dbReference>
<dbReference type="GO" id="GO:0006629">
    <property type="term" value="P:lipid metabolic process"/>
    <property type="evidence" value="ECO:0000314"/>
    <property type="project" value="UniProtKB"/>
</dbReference>
<dbReference type="GO" id="GO:1900016">
    <property type="term" value="P:negative regulation of cytokine production involved in inflammatory response"/>
    <property type="evidence" value="ECO:0000314"/>
    <property type="project" value="UniProtKB"/>
</dbReference>
<dbReference type="GO" id="GO:0051895">
    <property type="term" value="P:negative regulation of focal adhesion assembly"/>
    <property type="evidence" value="ECO:0000315"/>
    <property type="project" value="UniProtKB"/>
</dbReference>
<dbReference type="GO" id="GO:0060588">
    <property type="term" value="P:negative regulation of lipoprotein lipid oxidation"/>
    <property type="evidence" value="ECO:0000314"/>
    <property type="project" value="UniProtKB"/>
</dbReference>
<dbReference type="GO" id="GO:0071638">
    <property type="term" value="P:negative regulation of monocyte chemotactic protein-1 production"/>
    <property type="evidence" value="ECO:0000314"/>
    <property type="project" value="UniProtKB"/>
</dbReference>
<dbReference type="GO" id="GO:0010642">
    <property type="term" value="P:negative regulation of platelet-derived growth factor receptor signaling pathway"/>
    <property type="evidence" value="ECO:0000314"/>
    <property type="project" value="UniProtKB"/>
</dbReference>
<dbReference type="GO" id="GO:0042308">
    <property type="term" value="P:negative regulation of protein import into nucleus"/>
    <property type="evidence" value="ECO:0000314"/>
    <property type="project" value="UniProtKB"/>
</dbReference>
<dbReference type="GO" id="GO:0048662">
    <property type="term" value="P:negative regulation of smooth muscle cell proliferation"/>
    <property type="evidence" value="ECO:0000314"/>
    <property type="project" value="UniProtKB"/>
</dbReference>
<dbReference type="GO" id="GO:2000098">
    <property type="term" value="P:negative regulation of smooth muscle cell-matrix adhesion"/>
    <property type="evidence" value="ECO:0000315"/>
    <property type="project" value="UniProtKB"/>
</dbReference>
<dbReference type="GO" id="GO:2000405">
    <property type="term" value="P:negative regulation of T cell migration"/>
    <property type="evidence" value="ECO:0000314"/>
    <property type="project" value="UniProtKB"/>
</dbReference>
<dbReference type="GO" id="GO:0014012">
    <property type="term" value="P:peripheral nervous system axon regeneration"/>
    <property type="evidence" value="ECO:0000250"/>
    <property type="project" value="UniProtKB"/>
</dbReference>
<dbReference type="GO" id="GO:0048678">
    <property type="term" value="P:response to axon injury"/>
    <property type="evidence" value="ECO:0000250"/>
    <property type="project" value="UniProtKB"/>
</dbReference>
<dbReference type="GO" id="GO:0000302">
    <property type="term" value="P:response to reactive oxygen species"/>
    <property type="evidence" value="ECO:0000314"/>
    <property type="project" value="UniProtKB"/>
</dbReference>
<dbReference type="GO" id="GO:0042246">
    <property type="term" value="P:tissue regeneration"/>
    <property type="evidence" value="ECO:0000250"/>
    <property type="project" value="UniProtKB"/>
</dbReference>
<dbReference type="CDD" id="cd19437">
    <property type="entry name" value="lipocalin_apoD-like"/>
    <property type="match status" value="1"/>
</dbReference>
<dbReference type="FunFam" id="2.40.128.20:FF:000003">
    <property type="entry name" value="Apolipoprotein D"/>
    <property type="match status" value="1"/>
</dbReference>
<dbReference type="Gene3D" id="2.40.128.20">
    <property type="match status" value="1"/>
</dbReference>
<dbReference type="InterPro" id="IPR026222">
    <property type="entry name" value="ApoD_vertbrte"/>
</dbReference>
<dbReference type="InterPro" id="IPR002969">
    <property type="entry name" value="ApolipopD"/>
</dbReference>
<dbReference type="InterPro" id="IPR012674">
    <property type="entry name" value="Calycin"/>
</dbReference>
<dbReference type="InterPro" id="IPR022271">
    <property type="entry name" value="Lipocalin_ApoD"/>
</dbReference>
<dbReference type="InterPro" id="IPR022272">
    <property type="entry name" value="Lipocalin_CS"/>
</dbReference>
<dbReference type="InterPro" id="IPR000566">
    <property type="entry name" value="Lipocln_cytosolic_FA-bd_dom"/>
</dbReference>
<dbReference type="PANTHER" id="PTHR10612">
    <property type="entry name" value="APOLIPOPROTEIN D"/>
    <property type="match status" value="1"/>
</dbReference>
<dbReference type="PANTHER" id="PTHR10612:SF34">
    <property type="entry name" value="APOLIPOPROTEIN D"/>
    <property type="match status" value="1"/>
</dbReference>
<dbReference type="Pfam" id="PF08212">
    <property type="entry name" value="Lipocalin_2"/>
    <property type="match status" value="1"/>
</dbReference>
<dbReference type="PIRSF" id="PIRSF036893">
    <property type="entry name" value="Lipocalin_ApoD"/>
    <property type="match status" value="1"/>
</dbReference>
<dbReference type="PRINTS" id="PR02058">
    <property type="entry name" value="APODVERTBRTE"/>
</dbReference>
<dbReference type="PRINTS" id="PR01219">
    <property type="entry name" value="APOLIPOPROTD"/>
</dbReference>
<dbReference type="PRINTS" id="PR00179">
    <property type="entry name" value="LIPOCALIN"/>
</dbReference>
<dbReference type="SUPFAM" id="SSF50814">
    <property type="entry name" value="Lipocalins"/>
    <property type="match status" value="1"/>
</dbReference>
<dbReference type="PROSITE" id="PS00213">
    <property type="entry name" value="LIPOCALIN"/>
    <property type="match status" value="1"/>
</dbReference>
<keyword id="KW-0002">3D-structure</keyword>
<keyword id="KW-0903">Direct protein sequencing</keyword>
<keyword id="KW-1015">Disulfide bond</keyword>
<keyword id="KW-0325">Glycoprotein</keyword>
<keyword id="KW-0446">Lipid-binding</keyword>
<keyword id="KW-1267">Proteomics identification</keyword>
<keyword id="KW-0873">Pyrrolidone carboxylic acid</keyword>
<keyword id="KW-1185">Reference proteome</keyword>
<keyword id="KW-0964">Secreted</keyword>
<keyword id="KW-0732">Signal</keyword>
<keyword id="KW-0813">Transport</keyword>
<name>APOD_HUMAN</name>
<accession>P05090</accession>
<accession>B2R579</accession>
<accession>D3DNW6</accession>
<accession>Q6IBG6</accession>
<comment type="function">
    <text>APOD occurs in the macromolecular complex with lecithin-cholesterol acyltransferase. It is probably involved in the transport and binding of bilin. Appears to be able to transport a variety of ligands in a number of different contexts.</text>
</comment>
<comment type="subunit">
    <text evidence="10">Homodimer. In plasma, also exists as a disulfide-linked heterodimer with APOA2.</text>
</comment>
<comment type="interaction">
    <interactant intactId="EBI-715495">
        <id>P05090</id>
    </interactant>
    <interactant intactId="EBI-11957045">
        <id>Q9NVV5-2</id>
        <label>AIG1</label>
    </interactant>
    <organismsDiffer>false</organismsDiffer>
    <experiments>3</experiments>
</comment>
<comment type="interaction">
    <interactant intactId="EBI-715495">
        <id>P05090</id>
    </interactant>
    <interactant intactId="EBI-2606935">
        <id>Q96BI3</id>
        <label>APH1A</label>
    </interactant>
    <organismsDiffer>false</organismsDiffer>
    <experiments>3</experiments>
</comment>
<comment type="interaction">
    <interactant intactId="EBI-715495">
        <id>P05090</id>
    </interactant>
    <interactant intactId="EBI-17444777">
        <id>O43315</id>
        <label>AQP9</label>
    </interactant>
    <organismsDiffer>false</organismsDiffer>
    <experiments>3</experiments>
</comment>
<comment type="interaction">
    <interactant intactId="EBI-715495">
        <id>P05090</id>
    </interactant>
    <interactant intactId="EBI-3904417">
        <id>Q99437</id>
        <label>ATP6V0B</label>
    </interactant>
    <organismsDiffer>false</organismsDiffer>
    <experiments>3</experiments>
</comment>
<comment type="interaction">
    <interactant intactId="EBI-715495">
        <id>P05090</id>
    </interactant>
    <interactant intactId="EBI-12935759">
        <id>O15342</id>
        <label>ATP6V0E1</label>
    </interactant>
    <organismsDiffer>false</organismsDiffer>
    <experiments>3</experiments>
</comment>
<comment type="interaction">
    <interactant intactId="EBI-715495">
        <id>P05090</id>
    </interactant>
    <interactant intactId="EBI-747430">
        <id>Q9BXK5</id>
        <label>BCL2L13</label>
    </interactant>
    <organismsDiffer>false</organismsDiffer>
    <experiments>3</experiments>
</comment>
<comment type="interaction">
    <interactant intactId="EBI-715495">
        <id>P05090</id>
    </interactant>
    <interactant intactId="EBI-700794">
        <id>Q13323</id>
        <label>BIK</label>
    </interactant>
    <organismsDiffer>false</organismsDiffer>
    <experiments>3</experiments>
</comment>
<comment type="interaction">
    <interactant intactId="EBI-715495">
        <id>P05090</id>
    </interactant>
    <interactant intactId="EBI-6657396">
        <id>P19397</id>
        <label>CD53</label>
    </interactant>
    <organismsDiffer>false</organismsDiffer>
    <experiments>3</experiments>
</comment>
<comment type="interaction">
    <interactant intactId="EBI-715495">
        <id>P05090</id>
    </interactant>
    <interactant intactId="EBI-7797864">
        <id>P11912</id>
        <label>CD79A</label>
    </interactant>
    <organismsDiffer>false</organismsDiffer>
    <experiments>3</experiments>
</comment>
<comment type="interaction">
    <interactant intactId="EBI-715495">
        <id>P05090</id>
    </interactant>
    <interactant intactId="EBI-740744">
        <id>O95471</id>
        <label>CLDN7</label>
    </interactant>
    <organismsDiffer>false</organismsDiffer>
    <experiments>3</experiments>
</comment>
<comment type="interaction">
    <interactant intactId="EBI-715495">
        <id>P05090</id>
    </interactant>
    <interactant intactId="EBI-2873246">
        <id>Q8IUN9</id>
        <label>CLEC10A</label>
    </interactant>
    <organismsDiffer>false</organismsDiffer>
    <experiments>3</experiments>
</comment>
<comment type="interaction">
    <interactant intactId="EBI-715495">
        <id>P05090</id>
    </interactant>
    <interactant intactId="EBI-18013275">
        <id>Q7Z7G2</id>
        <label>CPLX4</label>
    </interactant>
    <organismsDiffer>false</organismsDiffer>
    <experiments>3</experiments>
</comment>
<comment type="interaction">
    <interactant intactId="EBI-715495">
        <id>P05090</id>
    </interactant>
    <interactant intactId="EBI-625022">
        <id>O43889-2</id>
        <label>CREB3</label>
    </interactant>
    <organismsDiffer>false</organismsDiffer>
    <experiments>4</experiments>
</comment>
<comment type="interaction">
    <interactant intactId="EBI-715495">
        <id>P05090</id>
    </interactant>
    <interactant intactId="EBI-6942903">
        <id>Q96BA8</id>
        <label>CREB3L1</label>
    </interactant>
    <organismsDiffer>false</organismsDiffer>
    <experiments>3</experiments>
</comment>
<comment type="interaction">
    <interactant intactId="EBI-715495">
        <id>P05090</id>
    </interactant>
    <interactant intactId="EBI-781551">
        <id>Q9Y282</id>
        <label>ERGIC3</label>
    </interactant>
    <organismsDiffer>false</organismsDiffer>
    <experiments>3</experiments>
</comment>
<comment type="interaction">
    <interactant intactId="EBI-715495">
        <id>P05090</id>
    </interactant>
    <interactant intactId="EBI-17640610">
        <id>P34910-2</id>
        <label>EVI2B</label>
    </interactant>
    <organismsDiffer>false</organismsDiffer>
    <experiments>3</experiments>
</comment>
<comment type="interaction">
    <interactant intactId="EBI-715495">
        <id>P05090</id>
    </interactant>
    <interactant intactId="EBI-18304435">
        <id>Q5JX71</id>
        <label>FAM209A</label>
    </interactant>
    <organismsDiffer>false</organismsDiffer>
    <experiments>3</experiments>
</comment>
<comment type="interaction">
    <interactant intactId="EBI-715495">
        <id>P05090</id>
    </interactant>
    <interactant intactId="EBI-2833872">
        <id>O15552</id>
        <label>FFAR2</label>
    </interactant>
    <organismsDiffer>false</organismsDiffer>
    <experiments>3</experiments>
</comment>
<comment type="interaction">
    <interactant intactId="EBI-715495">
        <id>P05090</id>
    </interactant>
    <interactant intactId="EBI-3918971">
        <id>Q9Y680</id>
        <label>FKBP7</label>
    </interactant>
    <organismsDiffer>false</organismsDiffer>
    <experiments>3</experiments>
</comment>
<comment type="interaction">
    <interactant intactId="EBI-715495">
        <id>P05090</id>
    </interactant>
    <interactant intactId="EBI-17291771">
        <id>P25090</id>
        <label>FPR2</label>
    </interactant>
    <organismsDiffer>false</organismsDiffer>
    <experiments>3</experiments>
</comment>
<comment type="interaction">
    <interactant intactId="EBI-715495">
        <id>P05090</id>
    </interactant>
    <interactant intactId="EBI-11110431">
        <id>Q8TB36</id>
        <label>GDAP1</label>
    </interactant>
    <organismsDiffer>false</organismsDiffer>
    <experiments>3</experiments>
</comment>
<comment type="interaction">
    <interactant intactId="EBI-715495">
        <id>P05090</id>
    </interactant>
    <interactant intactId="EBI-17458373">
        <id>P48165</id>
        <label>GJA8</label>
    </interactant>
    <organismsDiffer>false</organismsDiffer>
    <experiments>3</experiments>
</comment>
<comment type="interaction">
    <interactant intactId="EBI-715495">
        <id>P05090</id>
    </interactant>
    <interactant intactId="EBI-3917143">
        <id>Q5T7V8</id>
        <label>GORAB</label>
    </interactant>
    <organismsDiffer>false</organismsDiffer>
    <experiments>3</experiments>
</comment>
<comment type="interaction">
    <interactant intactId="EBI-715495">
        <id>P05090</id>
    </interactant>
    <interactant intactId="EBI-11955647">
        <id>Q8TDV0</id>
        <label>GPR151</label>
    </interactant>
    <organismsDiffer>false</organismsDiffer>
    <experiments>3</experiments>
</comment>
<comment type="interaction">
    <interactant intactId="EBI-715495">
        <id>P05090</id>
    </interactant>
    <interactant intactId="EBI-18076404">
        <id>O15529</id>
        <label>GPR42</label>
    </interactant>
    <organismsDiffer>false</organismsDiffer>
    <experiments>3</experiments>
</comment>
<comment type="interaction">
    <interactant intactId="EBI-715495">
        <id>P05090</id>
    </interactant>
    <interactant intactId="EBI-11721746">
        <id>Q8TED1</id>
        <label>GPX8</label>
    </interactant>
    <organismsDiffer>false</organismsDiffer>
    <experiments>3</experiments>
</comment>
<comment type="interaction">
    <interactant intactId="EBI-715495">
        <id>P05090</id>
    </interactant>
    <interactant intactId="EBI-12017638">
        <id>P48051</id>
        <label>KCNJ6</label>
    </interactant>
    <organismsDiffer>false</organismsDiffer>
    <experiments>3</experiments>
</comment>
<comment type="interaction">
    <interactant intactId="EBI-715495">
        <id>P05090</id>
    </interactant>
    <interactant intactId="EBI-8632435">
        <id>P43628</id>
        <label>KIR2DL3</label>
    </interactant>
    <organismsDiffer>false</organismsDiffer>
    <experiments>3</experiments>
</comment>
<comment type="interaction">
    <interactant intactId="EBI-715495">
        <id>P05090</id>
    </interactant>
    <interactant intactId="EBI-1809742">
        <id>P56270</id>
        <label>MAZ</label>
    </interactant>
    <organismsDiffer>false</organismsDiffer>
    <experiments>2</experiments>
</comment>
<comment type="interaction">
    <interactant intactId="EBI-715495">
        <id>P05090</id>
    </interactant>
    <interactant intactId="EBI-11956541">
        <id>Q9GZY8-5</id>
        <label>MFF</label>
    </interactant>
    <organismsDiffer>false</organismsDiffer>
    <experiments>3</experiments>
</comment>
<comment type="interaction">
    <interactant intactId="EBI-715495">
        <id>P05090</id>
    </interactant>
    <interactant intactId="EBI-724754">
        <id>O14880</id>
        <label>MGST3</label>
    </interactant>
    <organismsDiffer>false</organismsDiffer>
    <experiments>3</experiments>
</comment>
<comment type="interaction">
    <interactant intactId="EBI-715495">
        <id>P05090</id>
    </interactant>
    <interactant intactId="EBI-17857560">
        <id>Q49AM1</id>
        <label>MTERF2</label>
    </interactant>
    <organismsDiffer>false</organismsDiffer>
    <experiments>3</experiments>
</comment>
<comment type="interaction">
    <interactant intactId="EBI-715495">
        <id>P05090</id>
    </interactant>
    <interactant intactId="EBI-3923617">
        <id>Q9H2K0</id>
        <label>MTIF3</label>
    </interactant>
    <organismsDiffer>false</organismsDiffer>
    <experiments>3</experiments>
</comment>
<comment type="interaction">
    <interactant intactId="EBI-715495">
        <id>P05090</id>
    </interactant>
    <interactant intactId="EBI-10247000">
        <id>Q6IBW4-4</id>
        <label>NCAPH2</label>
    </interactant>
    <organismsDiffer>false</organismsDiffer>
    <experiments>3</experiments>
</comment>
<comment type="interaction">
    <interactant intactId="EBI-715495">
        <id>P05090</id>
    </interactant>
    <interactant intactId="EBI-716063">
        <id>Q13113</id>
        <label>PDZK1IP1</label>
    </interactant>
    <organismsDiffer>false</organismsDiffer>
    <experiments>3</experiments>
</comment>
<comment type="interaction">
    <interactant intactId="EBI-715495">
        <id>P05090</id>
    </interactant>
    <interactant intactId="EBI-12104986">
        <id>O75783</id>
        <label>RHBDL1</label>
    </interactant>
    <organismsDiffer>false</organismsDiffer>
    <experiments>3</experiments>
</comment>
<comment type="interaction">
    <interactant intactId="EBI-715495">
        <id>P05090</id>
    </interactant>
    <interactant intactId="EBI-18052611">
        <id>Q8N7X8</id>
        <label>SIGLECL1</label>
    </interactant>
    <organismsDiffer>false</organismsDiffer>
    <experiments>3</experiments>
</comment>
<comment type="interaction">
    <interactant intactId="EBI-715495">
        <id>P05090</id>
    </interactant>
    <interactant intactId="EBI-18159983">
        <id>Q3KNW5</id>
        <label>SLC10A6</label>
    </interactant>
    <organismsDiffer>false</organismsDiffer>
    <experiments>3</experiments>
</comment>
<comment type="interaction">
    <interactant intactId="EBI-715495">
        <id>P05090</id>
    </interactant>
    <interactant intactId="EBI-20841586">
        <id>Q96A29</id>
        <label>SLC35C1</label>
    </interactant>
    <organismsDiffer>false</organismsDiffer>
    <experiments>2</experiments>
</comment>
<comment type="interaction">
    <interactant intactId="EBI-715495">
        <id>P05090</id>
    </interactant>
    <interactant intactId="EBI-17295964">
        <id>Q9NQQ7-3</id>
        <label>SLC35C2</label>
    </interactant>
    <organismsDiffer>false</organismsDiffer>
    <experiments>3</experiments>
</comment>
<comment type="interaction">
    <interactant intactId="EBI-715495">
        <id>P05090</id>
    </interactant>
    <interactant intactId="EBI-19027521">
        <id>Q8N6K0</id>
        <label>TEX29</label>
    </interactant>
    <organismsDiffer>false</organismsDiffer>
    <experiments>3</experiments>
</comment>
<comment type="interaction">
    <interactant intactId="EBI-715495">
        <id>P05090</id>
    </interactant>
    <interactant intactId="EBI-10982110">
        <id>Q96Q45-2</id>
        <label>TMEM237</label>
    </interactant>
    <organismsDiffer>false</organismsDiffer>
    <experiments>5</experiments>
</comment>
<comment type="interaction">
    <interactant intactId="EBI-715495">
        <id>P05090</id>
    </interactant>
    <interactant intactId="EBI-3923061">
        <id>Q96B21</id>
        <label>TMEM45B</label>
    </interactant>
    <organismsDiffer>false</organismsDiffer>
    <experiments>3</experiments>
</comment>
<comment type="interaction">
    <interactant intactId="EBI-715495">
        <id>P05090</id>
    </interactant>
    <interactant intactId="EBI-18178701">
        <id>Q4KMG9</id>
        <label>TMEM52B</label>
    </interactant>
    <organismsDiffer>false</organismsDiffer>
    <experiments>3</experiments>
</comment>
<comment type="interaction">
    <interactant intactId="EBI-715495">
        <id>P05090</id>
    </interactant>
    <interactant intactId="EBI-8649725">
        <id>Q9BSE2</id>
        <label>TMEM79</label>
    </interactant>
    <organismsDiffer>false</organismsDiffer>
    <experiments>3</experiments>
</comment>
<comment type="interaction">
    <interactant intactId="EBI-715495">
        <id>P05090</id>
    </interactant>
    <interactant intactId="EBI-1059156">
        <id>Q9P0L0</id>
        <label>VAPA</label>
    </interactant>
    <organismsDiffer>false</organismsDiffer>
    <experiments>6</experiments>
</comment>
<comment type="interaction">
    <interactant intactId="EBI-715495">
        <id>P05090</id>
    </interactant>
    <interactant intactId="EBI-744988">
        <id>Q9H7M9</id>
        <label>VSIR</label>
    </interactant>
    <organismsDiffer>false</organismsDiffer>
    <experiments>3</experiments>
</comment>
<comment type="interaction">
    <interactant intactId="EBI-715495">
        <id>P05090</id>
    </interactant>
    <interactant intactId="EBI-10174961">
        <id>A8KA83</id>
    </interactant>
    <organismsDiffer>false</organismsDiffer>
    <experiments>3</experiments>
</comment>
<comment type="subcellular location">
    <subcellularLocation>
        <location>Secreted</location>
    </subcellularLocation>
</comment>
<comment type="tissue specificity">
    <text>Expressed in liver, intestine, pancreas, kidney, placenta, adrenal, spleen, fetal brain tissue and tears.</text>
</comment>
<comment type="PTM">
    <text evidence="2 3 4 5 6 7 9 10">N-glycosylated. N-glycan heterogeneity at Asn-65: Hex5HexNAc4 (major) and Hex6HexNAc5 (minor); at Asn-98: Hex5HexNAc4 (minor), dHex1Hex5HexNAc4 (major), dHex1Hex6HexNAc5 (minor) and dHex1Hex7HexNAc6 (minor).</text>
</comment>
<comment type="miscellaneous">
    <text>APOD is primarily localized in HDL (60-65%), with most of the remainder in VHDL and only trace amounts in VLDL and LDL.</text>
</comment>
<comment type="similarity">
    <text evidence="11">Belongs to the calycin superfamily. Lipocalin family.</text>
</comment>
<proteinExistence type="evidence at protein level"/>
<protein>
    <recommendedName>
        <fullName>Apolipoprotein D</fullName>
        <shortName>Apo-D</shortName>
        <shortName>ApoD</shortName>
    </recommendedName>
</protein>
<feature type="signal peptide" evidence="10">
    <location>
        <begin position="1"/>
        <end position="20"/>
    </location>
</feature>
<feature type="chain" id="PRO_0000017872" description="Apolipoprotein D">
    <location>
        <begin position="21"/>
        <end position="189"/>
    </location>
</feature>
<feature type="modified residue" description="Pyrrolidone carboxylic acid" evidence="8 10">
    <location>
        <position position="21"/>
    </location>
</feature>
<feature type="glycosylation site" description="N-linked (GlcNAc...) (complex) asparagine" evidence="5 7 9 10">
    <location>
        <position position="65"/>
    </location>
</feature>
<feature type="glycosylation site" description="N-linked (GlcNAc...) (complex) asparagine" evidence="2 3 4 5 6 7 9 10">
    <location>
        <position position="98"/>
    </location>
</feature>
<feature type="disulfide bond" evidence="10">
    <location>
        <begin position="28"/>
        <end position="134"/>
    </location>
</feature>
<feature type="disulfide bond" evidence="10">
    <location>
        <begin position="61"/>
        <end position="185"/>
    </location>
</feature>
<feature type="disulfide bond" description="Interchain (with C-29 in APOA2)" evidence="10">
    <location>
        <position position="136"/>
    </location>
</feature>
<feature type="sequence variant" id="VAR_011931" description="In dbSNP:rs5952." evidence="1">
    <original>F</original>
    <variation>S</variation>
    <location>
        <position position="15"/>
    </location>
</feature>
<feature type="sequence variant" id="VAR_011932" description="In dbSNP:rs5954." evidence="1">
    <original>S</original>
    <variation>L</variation>
    <location>
        <position position="115"/>
    </location>
</feature>
<feature type="sequence variant" id="VAR_011933" description="In dbSNP:rs5955." evidence="1">
    <original>T</original>
    <variation>K</variation>
    <location>
        <position position="178"/>
    </location>
</feature>
<feature type="strand" evidence="12">
    <location>
        <begin position="24"/>
        <end position="27"/>
    </location>
</feature>
<feature type="helix" evidence="12">
    <location>
        <begin position="39"/>
        <end position="41"/>
    </location>
</feature>
<feature type="strand" evidence="12">
    <location>
        <begin position="44"/>
        <end position="51"/>
    </location>
</feature>
<feature type="strand" evidence="12">
    <location>
        <begin position="60"/>
        <end position="68"/>
    </location>
</feature>
<feature type="strand" evidence="12">
    <location>
        <begin position="74"/>
        <end position="81"/>
    </location>
</feature>
<feature type="strand" evidence="12">
    <location>
        <begin position="87"/>
        <end position="97"/>
    </location>
</feature>
<feature type="strand" evidence="12">
    <location>
        <begin position="104"/>
        <end position="108"/>
    </location>
</feature>
<feature type="strand" evidence="12">
    <location>
        <begin position="116"/>
        <end position="123"/>
    </location>
</feature>
<feature type="strand" evidence="12">
    <location>
        <begin position="125"/>
        <end position="138"/>
    </location>
</feature>
<feature type="strand" evidence="12">
    <location>
        <begin position="141"/>
        <end position="153"/>
    </location>
</feature>
<feature type="helix" evidence="12">
    <location>
        <begin position="157"/>
        <end position="169"/>
    </location>
</feature>
<feature type="strand" evidence="12">
    <location>
        <begin position="183"/>
        <end position="185"/>
    </location>
</feature>